<reference key="1">
    <citation type="journal article" date="2005" name="Gene">
        <title>Characterization of the origin recognition complex (ORC) from a higher plant, rice (Oryza sativa L.).</title>
        <authorList>
            <person name="Mori Y."/>
            <person name="Yamamoto T."/>
            <person name="Sakaguchi N."/>
            <person name="Ishibashi T."/>
            <person name="Furukawa T."/>
            <person name="Kadota Y."/>
            <person name="Kuchitsu K."/>
            <person name="Hashimoto J."/>
            <person name="Kimura S."/>
            <person name="Sakaguchi K."/>
        </authorList>
    </citation>
    <scope>NUCLEOTIDE SEQUENCE [MRNA] (ISOFORM 2)</scope>
    <scope>INDUCTION BY SUCROSE</scope>
    <scope>TISSUE SPECIFICITY</scope>
    <scope>GENE FAMILY</scope>
    <scope>NOMENCLATURE</scope>
</reference>
<reference key="2">
    <citation type="journal article" date="2002" name="Nature">
        <title>The genome sequence and structure of rice chromosome 1.</title>
        <authorList>
            <person name="Sasaki T."/>
            <person name="Matsumoto T."/>
            <person name="Yamamoto K."/>
            <person name="Sakata K."/>
            <person name="Baba T."/>
            <person name="Katayose Y."/>
            <person name="Wu J."/>
            <person name="Niimura Y."/>
            <person name="Cheng Z."/>
            <person name="Nagamura Y."/>
            <person name="Antonio B.A."/>
            <person name="Kanamori H."/>
            <person name="Hosokawa S."/>
            <person name="Masukawa M."/>
            <person name="Arikawa K."/>
            <person name="Chiden Y."/>
            <person name="Hayashi M."/>
            <person name="Okamoto M."/>
            <person name="Ando T."/>
            <person name="Aoki H."/>
            <person name="Arita K."/>
            <person name="Hamada M."/>
            <person name="Harada C."/>
            <person name="Hijishita S."/>
            <person name="Honda M."/>
            <person name="Ichikawa Y."/>
            <person name="Idonuma A."/>
            <person name="Iijima M."/>
            <person name="Ikeda M."/>
            <person name="Ikeno M."/>
            <person name="Ito S."/>
            <person name="Ito T."/>
            <person name="Ito Y."/>
            <person name="Ito Y."/>
            <person name="Iwabuchi A."/>
            <person name="Kamiya K."/>
            <person name="Karasawa W."/>
            <person name="Katagiri S."/>
            <person name="Kikuta A."/>
            <person name="Kobayashi N."/>
            <person name="Kono I."/>
            <person name="Machita K."/>
            <person name="Maehara T."/>
            <person name="Mizuno H."/>
            <person name="Mizubayashi T."/>
            <person name="Mukai Y."/>
            <person name="Nagasaki H."/>
            <person name="Nakashima M."/>
            <person name="Nakama Y."/>
            <person name="Nakamichi Y."/>
            <person name="Nakamura M."/>
            <person name="Namiki N."/>
            <person name="Negishi M."/>
            <person name="Ohta I."/>
            <person name="Ono N."/>
            <person name="Saji S."/>
            <person name="Sakai K."/>
            <person name="Shibata M."/>
            <person name="Shimokawa T."/>
            <person name="Shomura A."/>
            <person name="Song J."/>
            <person name="Takazaki Y."/>
            <person name="Terasawa K."/>
            <person name="Tsuji K."/>
            <person name="Waki K."/>
            <person name="Yamagata H."/>
            <person name="Yamane H."/>
            <person name="Yoshiki S."/>
            <person name="Yoshihara R."/>
            <person name="Yukawa K."/>
            <person name="Zhong H."/>
            <person name="Iwama H."/>
            <person name="Endo T."/>
            <person name="Ito H."/>
            <person name="Hahn J.H."/>
            <person name="Kim H.-I."/>
            <person name="Eun M.-Y."/>
            <person name="Yano M."/>
            <person name="Jiang J."/>
            <person name="Gojobori T."/>
        </authorList>
    </citation>
    <scope>NUCLEOTIDE SEQUENCE [LARGE SCALE GENOMIC DNA]</scope>
    <source>
        <strain>cv. Nipponbare</strain>
    </source>
</reference>
<reference key="3">
    <citation type="journal article" date="2005" name="Nature">
        <title>The map-based sequence of the rice genome.</title>
        <authorList>
            <consortium name="International rice genome sequencing project (IRGSP)"/>
        </authorList>
    </citation>
    <scope>NUCLEOTIDE SEQUENCE [LARGE SCALE GENOMIC DNA]</scope>
    <source>
        <strain>cv. Nipponbare</strain>
    </source>
</reference>
<reference key="4">
    <citation type="journal article" date="2008" name="Nucleic Acids Res.">
        <title>The rice annotation project database (RAP-DB): 2008 update.</title>
        <authorList>
            <consortium name="The rice annotation project (RAP)"/>
        </authorList>
    </citation>
    <scope>GENOME REANNOTATION</scope>
    <source>
        <strain>cv. Nipponbare</strain>
    </source>
</reference>
<reference key="5">
    <citation type="journal article" date="2013" name="Rice">
        <title>Improvement of the Oryza sativa Nipponbare reference genome using next generation sequence and optical map data.</title>
        <authorList>
            <person name="Kawahara Y."/>
            <person name="de la Bastide M."/>
            <person name="Hamilton J.P."/>
            <person name="Kanamori H."/>
            <person name="McCombie W.R."/>
            <person name="Ouyang S."/>
            <person name="Schwartz D.C."/>
            <person name="Tanaka T."/>
            <person name="Wu J."/>
            <person name="Zhou S."/>
            <person name="Childs K.L."/>
            <person name="Davidson R.M."/>
            <person name="Lin H."/>
            <person name="Quesada-Ocampo L."/>
            <person name="Vaillancourt B."/>
            <person name="Sakai H."/>
            <person name="Lee S.S."/>
            <person name="Kim J."/>
            <person name="Numa H."/>
            <person name="Itoh T."/>
            <person name="Buell C.R."/>
            <person name="Matsumoto T."/>
        </authorList>
    </citation>
    <scope>GENOME REANNOTATION</scope>
    <source>
        <strain>cv. Nipponbare</strain>
    </source>
</reference>
<reference key="6">
    <citation type="journal article" date="2005" name="PLoS Biol.">
        <title>The genomes of Oryza sativa: a history of duplications.</title>
        <authorList>
            <person name="Yu J."/>
            <person name="Wang J."/>
            <person name="Lin W."/>
            <person name="Li S."/>
            <person name="Li H."/>
            <person name="Zhou J."/>
            <person name="Ni P."/>
            <person name="Dong W."/>
            <person name="Hu S."/>
            <person name="Zeng C."/>
            <person name="Zhang J."/>
            <person name="Zhang Y."/>
            <person name="Li R."/>
            <person name="Xu Z."/>
            <person name="Li S."/>
            <person name="Li X."/>
            <person name="Zheng H."/>
            <person name="Cong L."/>
            <person name="Lin L."/>
            <person name="Yin J."/>
            <person name="Geng J."/>
            <person name="Li G."/>
            <person name="Shi J."/>
            <person name="Liu J."/>
            <person name="Lv H."/>
            <person name="Li J."/>
            <person name="Wang J."/>
            <person name="Deng Y."/>
            <person name="Ran L."/>
            <person name="Shi X."/>
            <person name="Wang X."/>
            <person name="Wu Q."/>
            <person name="Li C."/>
            <person name="Ren X."/>
            <person name="Wang J."/>
            <person name="Wang X."/>
            <person name="Li D."/>
            <person name="Liu D."/>
            <person name="Zhang X."/>
            <person name="Ji Z."/>
            <person name="Zhao W."/>
            <person name="Sun Y."/>
            <person name="Zhang Z."/>
            <person name="Bao J."/>
            <person name="Han Y."/>
            <person name="Dong L."/>
            <person name="Ji J."/>
            <person name="Chen P."/>
            <person name="Wu S."/>
            <person name="Liu J."/>
            <person name="Xiao Y."/>
            <person name="Bu D."/>
            <person name="Tan J."/>
            <person name="Yang L."/>
            <person name="Ye C."/>
            <person name="Zhang J."/>
            <person name="Xu J."/>
            <person name="Zhou Y."/>
            <person name="Yu Y."/>
            <person name="Zhang B."/>
            <person name="Zhuang S."/>
            <person name="Wei H."/>
            <person name="Liu B."/>
            <person name="Lei M."/>
            <person name="Yu H."/>
            <person name="Li Y."/>
            <person name="Xu H."/>
            <person name="Wei S."/>
            <person name="He X."/>
            <person name="Fang L."/>
            <person name="Zhang Z."/>
            <person name="Zhang Y."/>
            <person name="Huang X."/>
            <person name="Su Z."/>
            <person name="Tong W."/>
            <person name="Li J."/>
            <person name="Tong Z."/>
            <person name="Li S."/>
            <person name="Ye J."/>
            <person name="Wang L."/>
            <person name="Fang L."/>
            <person name="Lei T."/>
            <person name="Chen C.-S."/>
            <person name="Chen H.-C."/>
            <person name="Xu Z."/>
            <person name="Li H."/>
            <person name="Huang H."/>
            <person name="Zhang F."/>
            <person name="Xu H."/>
            <person name="Li N."/>
            <person name="Zhao C."/>
            <person name="Li S."/>
            <person name="Dong L."/>
            <person name="Huang Y."/>
            <person name="Li L."/>
            <person name="Xi Y."/>
            <person name="Qi Q."/>
            <person name="Li W."/>
            <person name="Zhang B."/>
            <person name="Hu W."/>
            <person name="Zhang Y."/>
            <person name="Tian X."/>
            <person name="Jiao Y."/>
            <person name="Liang X."/>
            <person name="Jin J."/>
            <person name="Gao L."/>
            <person name="Zheng W."/>
            <person name="Hao B."/>
            <person name="Liu S.-M."/>
            <person name="Wang W."/>
            <person name="Yuan L."/>
            <person name="Cao M."/>
            <person name="McDermott J."/>
            <person name="Samudrala R."/>
            <person name="Wang J."/>
            <person name="Wong G.K.-S."/>
            <person name="Yang H."/>
        </authorList>
    </citation>
    <scope>NUCLEOTIDE SEQUENCE [LARGE SCALE GENOMIC DNA]</scope>
    <source>
        <strain>cv. Nipponbare</strain>
    </source>
</reference>
<reference key="7">
    <citation type="journal article" date="2003" name="Science">
        <title>Collection, mapping, and annotation of over 28,000 cDNA clones from japonica rice.</title>
        <authorList>
            <consortium name="The rice full-length cDNA consortium"/>
        </authorList>
    </citation>
    <scope>NUCLEOTIDE SEQUENCE [LARGE SCALE MRNA] (ISOFORM 1)</scope>
    <source>
        <strain>cv. Nipponbare</strain>
    </source>
</reference>
<reference key="8">
    <citation type="journal article" date="2007" name="Plant Physiol.">
        <title>Genome-wide analysis of the core DNA replication machinery in the higher plants Arabidopsis and rice.</title>
        <authorList>
            <person name="Shultz R.W."/>
            <person name="Tatineni V.M."/>
            <person name="Hanley-Bowdoin L."/>
            <person name="Thompson W.F."/>
        </authorList>
    </citation>
    <scope>REVIEW ON THE CORE DNA REPLICATION MACHINERY</scope>
</reference>
<sequence>MAAAAAAASVASQAQAVLRGRLCDQAVVHSALRSSPDTNYSKLKYLVASSVSEACNNSVLLLGPRGCGKAAVRFSFLVYSSAPLSAVFSDAGVVFDEMCQWAIYDFTLWVVSAWTEVVDMVLDDLKKDHPDAISVIRLNGMLHSDDNCATKEIARQLCLEHQLSFSKMASSDDNTEFMIDMLRECGLAHKTIIFVLEEFDLFAQGKQRLLYSLLDAMQSLTSQAVVIGVSCRLDADQLLEKRVRSRFSHRKLLFVPSSVDSLQRLMEHLLALPEDSPLPTKYVREYNARITSIFNDKKFKGILSSLTDADATTSHILRFLFRVVSYMDIDSGLLSMQSFMNALSSMQRQPKMDSLQDLSILELYILVCMNRLEDKEKSSYNFITIMKEYKSVQDAYKTSDKYSHTVCFRAFEHLLDRELISFADNKGRNQALEYRPVKLLISSRELAESLKLNTTCPAVLQKLLDRERYM</sequence>
<name>ORC4_ORYSJ</name>
<feature type="chain" id="PRO_0000431434" description="Origin of replication complex subunit 4">
    <location>
        <begin position="1"/>
        <end position="470"/>
    </location>
</feature>
<feature type="binding site" evidence="3">
    <location>
        <begin position="63"/>
        <end position="70"/>
    </location>
    <ligand>
        <name>ATP</name>
        <dbReference type="ChEBI" id="CHEBI:30616"/>
    </ligand>
</feature>
<feature type="splice variant" id="VSP_057261" description="In isoform 2.">
    <location>
        <begin position="72"/>
        <end position="116"/>
    </location>
</feature>
<feature type="sequence conflict" description="In Ref. 1; BAC77041." evidence="6" ref="1">
    <original>L</original>
    <variation>P</variation>
    <location>
        <position position="125"/>
    </location>
</feature>
<feature type="sequence conflict" description="In Ref. 1; BAC77041." evidence="6" ref="1">
    <original>S</original>
    <variation>G</variation>
    <location>
        <position position="354"/>
    </location>
</feature>
<feature type="sequence conflict" description="In Ref. 1; BAC77041." evidence="6" ref="1">
    <original>RELAESLK</original>
    <variation>LELADSLN</variation>
    <location>
        <begin position="444"/>
        <end position="451"/>
    </location>
</feature>
<feature type="sequence conflict" description="In Ref. 1; BAC77041." evidence="6" ref="1">
    <original>L</original>
    <variation>F</variation>
    <location>
        <position position="460"/>
    </location>
</feature>
<evidence type="ECO:0000250" key="1">
    <source>
        <dbReference type="UniProtKB" id="O43929"/>
    </source>
</evidence>
<evidence type="ECO:0000250" key="2">
    <source>
        <dbReference type="UniProtKB" id="Q6EWX1"/>
    </source>
</evidence>
<evidence type="ECO:0000255" key="3"/>
<evidence type="ECO:0000269" key="4">
    <source>
    </source>
</evidence>
<evidence type="ECO:0000303" key="5">
    <source>
    </source>
</evidence>
<evidence type="ECO:0000305" key="6"/>
<evidence type="ECO:0000312" key="7">
    <source>
        <dbReference type="EMBL" id="BAD82152.1"/>
    </source>
</evidence>
<evidence type="ECO:0000312" key="8">
    <source>
        <dbReference type="EMBL" id="EEE55188.1"/>
    </source>
</evidence>
<evidence type="ECO:0000312" key="9">
    <source>
        <dbReference type="Proteomes" id="UP000059680"/>
    </source>
</evidence>
<dbReference type="EMBL" id="AB110983">
    <property type="protein sequence ID" value="BAC77041.1"/>
    <property type="molecule type" value="mRNA"/>
</dbReference>
<dbReference type="EMBL" id="AP003347">
    <property type="protein sequence ID" value="BAD82152.1"/>
    <property type="molecule type" value="Genomic_DNA"/>
</dbReference>
<dbReference type="EMBL" id="AP008207">
    <property type="protein sequence ID" value="BAF05802.1"/>
    <property type="molecule type" value="Genomic_DNA"/>
</dbReference>
<dbReference type="EMBL" id="AP014957">
    <property type="protein sequence ID" value="BAS73726.1"/>
    <property type="molecule type" value="Genomic_DNA"/>
</dbReference>
<dbReference type="EMBL" id="CM000138">
    <property type="protein sequence ID" value="EEE55188.1"/>
    <property type="molecule type" value="Genomic_DNA"/>
</dbReference>
<dbReference type="EMBL" id="AK102997">
    <property type="protein sequence ID" value="BAG95826.1"/>
    <property type="molecule type" value="mRNA"/>
</dbReference>
<dbReference type="RefSeq" id="XP_015612928.1">
    <property type="nucleotide sequence ID" value="XM_015757442.1"/>
</dbReference>
<dbReference type="RefSeq" id="XP_015612935.1">
    <property type="nucleotide sequence ID" value="XM_015757449.1"/>
</dbReference>
<dbReference type="SMR" id="Q5N8Q4"/>
<dbReference type="FunCoup" id="Q5N8Q4">
    <property type="interactions" value="1399"/>
</dbReference>
<dbReference type="STRING" id="39947.Q5N8Q4"/>
<dbReference type="PaxDb" id="39947-Q5N8Q4"/>
<dbReference type="EnsemblPlants" id="Os01t0683400-01">
    <molecule id="Q5N8Q4-1"/>
    <property type="protein sequence ID" value="Os01t0683400-01"/>
    <property type="gene ID" value="Os01g0683400"/>
</dbReference>
<dbReference type="Gramene" id="Os01t0683400-01">
    <molecule id="Q5N8Q4-1"/>
    <property type="protein sequence ID" value="Os01t0683400-01"/>
    <property type="gene ID" value="Os01g0683400"/>
</dbReference>
<dbReference type="KEGG" id="dosa:Os01g0683400"/>
<dbReference type="eggNOG" id="KOG2228">
    <property type="taxonomic scope" value="Eukaryota"/>
</dbReference>
<dbReference type="HOGENOM" id="CLU_007115_0_1_1"/>
<dbReference type="InParanoid" id="Q5N8Q4"/>
<dbReference type="OMA" id="AFTFQRN"/>
<dbReference type="OrthoDB" id="343623at2759"/>
<dbReference type="PlantReactome" id="R-OSA-9640882">
    <property type="pathway name" value="Assembly of pre-replication complex"/>
</dbReference>
<dbReference type="PlantReactome" id="R-OSA-9645850">
    <property type="pathway name" value="Activation of pre-replication complex"/>
</dbReference>
<dbReference type="Proteomes" id="UP000000763">
    <property type="component" value="Chromosome 1"/>
</dbReference>
<dbReference type="Proteomes" id="UP000007752">
    <property type="component" value="Chromosome 1"/>
</dbReference>
<dbReference type="Proteomes" id="UP000059680">
    <property type="component" value="Chromosome 1"/>
</dbReference>
<dbReference type="GO" id="GO:0005664">
    <property type="term" value="C:nuclear origin of replication recognition complex"/>
    <property type="evidence" value="ECO:0000318"/>
    <property type="project" value="GO_Central"/>
</dbReference>
<dbReference type="GO" id="GO:0005524">
    <property type="term" value="F:ATP binding"/>
    <property type="evidence" value="ECO:0007669"/>
    <property type="project" value="UniProtKB-KW"/>
</dbReference>
<dbReference type="GO" id="GO:0003688">
    <property type="term" value="F:DNA replication origin binding"/>
    <property type="evidence" value="ECO:0000318"/>
    <property type="project" value="GO_Central"/>
</dbReference>
<dbReference type="GO" id="GO:0006270">
    <property type="term" value="P:DNA replication initiation"/>
    <property type="evidence" value="ECO:0000318"/>
    <property type="project" value="GO_Central"/>
</dbReference>
<dbReference type="GO" id="GO:0009744">
    <property type="term" value="P:response to sucrose"/>
    <property type="evidence" value="ECO:0000314"/>
    <property type="project" value="UniProtKB"/>
</dbReference>
<dbReference type="FunFam" id="3.40.50.300:FF:001041">
    <property type="entry name" value="Origin of replication complex subunit 4"/>
    <property type="match status" value="1"/>
</dbReference>
<dbReference type="Gene3D" id="3.40.50.300">
    <property type="entry name" value="P-loop containing nucleotide triphosphate hydrolases"/>
    <property type="match status" value="1"/>
</dbReference>
<dbReference type="InterPro" id="IPR016527">
    <property type="entry name" value="ORC4"/>
</dbReference>
<dbReference type="InterPro" id="IPR032705">
    <property type="entry name" value="ORC4_C"/>
</dbReference>
<dbReference type="InterPro" id="IPR027417">
    <property type="entry name" value="P-loop_NTPase"/>
</dbReference>
<dbReference type="PANTHER" id="PTHR12087">
    <property type="entry name" value="ORIGIN RECOGNITION COMPLEX SUBUNIT 4"/>
    <property type="match status" value="1"/>
</dbReference>
<dbReference type="PANTHER" id="PTHR12087:SF0">
    <property type="entry name" value="ORIGIN RECOGNITION COMPLEX SUBUNIT 4"/>
    <property type="match status" value="1"/>
</dbReference>
<dbReference type="Pfam" id="PF14629">
    <property type="entry name" value="ORC4_C"/>
    <property type="match status" value="1"/>
</dbReference>
<dbReference type="PIRSF" id="PIRSF007858">
    <property type="entry name" value="ORC4"/>
    <property type="match status" value="1"/>
</dbReference>
<dbReference type="SUPFAM" id="SSF52540">
    <property type="entry name" value="P-loop containing nucleoside triphosphate hydrolases"/>
    <property type="match status" value="1"/>
</dbReference>
<comment type="function">
    <text evidence="1">Component of the origin recognition complex (ORC) that binds origins of replication. DNA-binding is ATP-dependent. The specific DNA sequences that define origins of replication have not been identified yet. ORC is required to assemble the pre-replication complex necessary to initiate DNA replication.</text>
</comment>
<comment type="subunit">
    <text evidence="2">Component of the origin recognition complex (ORC) composed of at least ORC1, ORC2, ORC3, ORC4, ORC5 and ORC6. ORC is regulated in a cell-cycle and development dependent manner. It is sequentially assembled at the exit from anaphase of mitosis and disassembled as cells enter S phase.</text>
</comment>
<comment type="subcellular location">
    <subcellularLocation>
        <location evidence="1">Nucleus</location>
    </subcellularLocation>
</comment>
<comment type="alternative products">
    <event type="alternative splicing"/>
    <isoform>
        <id>Q5N8Q4-1</id>
        <name>1</name>
        <sequence type="displayed"/>
    </isoform>
    <isoform>
        <id>Q5N8Q4-2</id>
        <name>2</name>
        <sequence type="described" ref="VSP_057261"/>
    </isoform>
</comment>
<comment type="tissue specificity">
    <text evidence="4">Expressed in the shoot apical meristem (SAM), leaves, ears and roots (including root tips).</text>
</comment>
<comment type="induction">
    <text evidence="4">Reduced expression upon sucrose depletion-mediated cell proliferation arrest, and accumulates after sucrose treatment.</text>
</comment>
<comment type="similarity">
    <text evidence="6">Belongs to the ORC4 family.</text>
</comment>
<accession>Q5N8Q4</accession>
<accession>A0A0P0V6N4</accession>
<accession>B9EYM5</accession>
<accession>Q7Y0X0</accession>
<protein>
    <recommendedName>
        <fullName evidence="5">Origin of replication complex subunit 4</fullName>
        <shortName evidence="5">OsORC4</shortName>
    </recommendedName>
</protein>
<organism evidence="9">
    <name type="scientific">Oryza sativa subsp. japonica</name>
    <name type="common">Rice</name>
    <dbReference type="NCBI Taxonomy" id="39947"/>
    <lineage>
        <taxon>Eukaryota</taxon>
        <taxon>Viridiplantae</taxon>
        <taxon>Streptophyta</taxon>
        <taxon>Embryophyta</taxon>
        <taxon>Tracheophyta</taxon>
        <taxon>Spermatophyta</taxon>
        <taxon>Magnoliopsida</taxon>
        <taxon>Liliopsida</taxon>
        <taxon>Poales</taxon>
        <taxon>Poaceae</taxon>
        <taxon>BOP clade</taxon>
        <taxon>Oryzoideae</taxon>
        <taxon>Oryzeae</taxon>
        <taxon>Oryzinae</taxon>
        <taxon>Oryza</taxon>
        <taxon>Oryza sativa</taxon>
    </lineage>
</organism>
<gene>
    <name evidence="5" type="primary">ORC4</name>
    <name evidence="6" type="ordered locus">LOC_Os01g49010</name>
    <name evidence="6" type="ordered locus">Os01g0683400</name>
    <name evidence="8" type="ORF">OsJ_03032</name>
    <name evidence="7" type="ORF">P0445E10.9</name>
</gene>
<proteinExistence type="evidence at transcript level"/>
<keyword id="KW-0025">Alternative splicing</keyword>
<keyword id="KW-0067">ATP-binding</keyword>
<keyword id="KW-0235">DNA replication</keyword>
<keyword id="KW-0238">DNA-binding</keyword>
<keyword id="KW-0547">Nucleotide-binding</keyword>
<keyword id="KW-0539">Nucleus</keyword>
<keyword id="KW-1185">Reference proteome</keyword>